<reference key="1">
    <citation type="journal article" date="2004" name="Nat. Genet.">
        <title>Comparison of genome degradation in Paratyphi A and Typhi, human-restricted serovars of Salmonella enterica that cause typhoid.</title>
        <authorList>
            <person name="McClelland M."/>
            <person name="Sanderson K.E."/>
            <person name="Clifton S.W."/>
            <person name="Latreille P."/>
            <person name="Porwollik S."/>
            <person name="Sabo A."/>
            <person name="Meyer R."/>
            <person name="Bieri T."/>
            <person name="Ozersky P."/>
            <person name="McLellan M."/>
            <person name="Harkins C.R."/>
            <person name="Wang C."/>
            <person name="Nguyen C."/>
            <person name="Berghoff A."/>
            <person name="Elliott G."/>
            <person name="Kohlberg S."/>
            <person name="Strong C."/>
            <person name="Du F."/>
            <person name="Carter J."/>
            <person name="Kremizki C."/>
            <person name="Layman D."/>
            <person name="Leonard S."/>
            <person name="Sun H."/>
            <person name="Fulton L."/>
            <person name="Nash W."/>
            <person name="Miner T."/>
            <person name="Minx P."/>
            <person name="Delehaunty K."/>
            <person name="Fronick C."/>
            <person name="Magrini V."/>
            <person name="Nhan M."/>
            <person name="Warren W."/>
            <person name="Florea L."/>
            <person name="Spieth J."/>
            <person name="Wilson R.K."/>
        </authorList>
    </citation>
    <scope>NUCLEOTIDE SEQUENCE [LARGE SCALE GENOMIC DNA]</scope>
    <source>
        <strain>ATCC 9150 / SARB42</strain>
    </source>
</reference>
<organism>
    <name type="scientific">Salmonella paratyphi A (strain ATCC 9150 / SARB42)</name>
    <dbReference type="NCBI Taxonomy" id="295319"/>
    <lineage>
        <taxon>Bacteria</taxon>
        <taxon>Pseudomonadati</taxon>
        <taxon>Pseudomonadota</taxon>
        <taxon>Gammaproteobacteria</taxon>
        <taxon>Enterobacterales</taxon>
        <taxon>Enterobacteriaceae</taxon>
        <taxon>Salmonella</taxon>
    </lineage>
</organism>
<feature type="chain" id="PRO_0000128868" description="4-hydroxy-3-methylbut-2-enyl diphosphate reductase">
    <location>
        <begin position="1"/>
        <end position="316"/>
    </location>
</feature>
<feature type="active site" description="Proton donor" evidence="1">
    <location>
        <position position="126"/>
    </location>
</feature>
<feature type="binding site" evidence="1">
    <location>
        <position position="12"/>
    </location>
    <ligand>
        <name>[4Fe-4S] cluster</name>
        <dbReference type="ChEBI" id="CHEBI:49883"/>
    </ligand>
</feature>
<feature type="binding site" evidence="1">
    <location>
        <position position="41"/>
    </location>
    <ligand>
        <name>(2E)-4-hydroxy-3-methylbut-2-enyl diphosphate</name>
        <dbReference type="ChEBI" id="CHEBI:128753"/>
    </ligand>
</feature>
<feature type="binding site" evidence="1">
    <location>
        <position position="41"/>
    </location>
    <ligand>
        <name>dimethylallyl diphosphate</name>
        <dbReference type="ChEBI" id="CHEBI:57623"/>
    </ligand>
</feature>
<feature type="binding site" evidence="1">
    <location>
        <position position="41"/>
    </location>
    <ligand>
        <name>isopentenyl diphosphate</name>
        <dbReference type="ChEBI" id="CHEBI:128769"/>
    </ligand>
</feature>
<feature type="binding site" evidence="1">
    <location>
        <position position="74"/>
    </location>
    <ligand>
        <name>(2E)-4-hydroxy-3-methylbut-2-enyl diphosphate</name>
        <dbReference type="ChEBI" id="CHEBI:128753"/>
    </ligand>
</feature>
<feature type="binding site" evidence="1">
    <location>
        <position position="74"/>
    </location>
    <ligand>
        <name>dimethylallyl diphosphate</name>
        <dbReference type="ChEBI" id="CHEBI:57623"/>
    </ligand>
</feature>
<feature type="binding site" evidence="1">
    <location>
        <position position="74"/>
    </location>
    <ligand>
        <name>isopentenyl diphosphate</name>
        <dbReference type="ChEBI" id="CHEBI:128769"/>
    </ligand>
</feature>
<feature type="binding site" evidence="1">
    <location>
        <position position="96"/>
    </location>
    <ligand>
        <name>[4Fe-4S] cluster</name>
        <dbReference type="ChEBI" id="CHEBI:49883"/>
    </ligand>
</feature>
<feature type="binding site" evidence="1">
    <location>
        <position position="124"/>
    </location>
    <ligand>
        <name>(2E)-4-hydroxy-3-methylbut-2-enyl diphosphate</name>
        <dbReference type="ChEBI" id="CHEBI:128753"/>
    </ligand>
</feature>
<feature type="binding site" evidence="1">
    <location>
        <position position="124"/>
    </location>
    <ligand>
        <name>dimethylallyl diphosphate</name>
        <dbReference type="ChEBI" id="CHEBI:57623"/>
    </ligand>
</feature>
<feature type="binding site" evidence="1">
    <location>
        <position position="124"/>
    </location>
    <ligand>
        <name>isopentenyl diphosphate</name>
        <dbReference type="ChEBI" id="CHEBI:128769"/>
    </ligand>
</feature>
<feature type="binding site" evidence="1">
    <location>
        <position position="167"/>
    </location>
    <ligand>
        <name>(2E)-4-hydroxy-3-methylbut-2-enyl diphosphate</name>
        <dbReference type="ChEBI" id="CHEBI:128753"/>
    </ligand>
</feature>
<feature type="binding site" evidence="1">
    <location>
        <position position="197"/>
    </location>
    <ligand>
        <name>[4Fe-4S] cluster</name>
        <dbReference type="ChEBI" id="CHEBI:49883"/>
    </ligand>
</feature>
<feature type="binding site" evidence="1">
    <location>
        <position position="225"/>
    </location>
    <ligand>
        <name>(2E)-4-hydroxy-3-methylbut-2-enyl diphosphate</name>
        <dbReference type="ChEBI" id="CHEBI:128753"/>
    </ligand>
</feature>
<feature type="binding site" evidence="1">
    <location>
        <position position="225"/>
    </location>
    <ligand>
        <name>dimethylallyl diphosphate</name>
        <dbReference type="ChEBI" id="CHEBI:57623"/>
    </ligand>
</feature>
<feature type="binding site" evidence="1">
    <location>
        <position position="225"/>
    </location>
    <ligand>
        <name>isopentenyl diphosphate</name>
        <dbReference type="ChEBI" id="CHEBI:128769"/>
    </ligand>
</feature>
<feature type="binding site" evidence="1">
    <location>
        <position position="226"/>
    </location>
    <ligand>
        <name>(2E)-4-hydroxy-3-methylbut-2-enyl diphosphate</name>
        <dbReference type="ChEBI" id="CHEBI:128753"/>
    </ligand>
</feature>
<feature type="binding site" evidence="1">
    <location>
        <position position="226"/>
    </location>
    <ligand>
        <name>dimethylallyl diphosphate</name>
        <dbReference type="ChEBI" id="CHEBI:57623"/>
    </ligand>
</feature>
<feature type="binding site" evidence="1">
    <location>
        <position position="226"/>
    </location>
    <ligand>
        <name>isopentenyl diphosphate</name>
        <dbReference type="ChEBI" id="CHEBI:128769"/>
    </ligand>
</feature>
<feature type="binding site" evidence="1">
    <location>
        <position position="227"/>
    </location>
    <ligand>
        <name>(2E)-4-hydroxy-3-methylbut-2-enyl diphosphate</name>
        <dbReference type="ChEBI" id="CHEBI:128753"/>
    </ligand>
</feature>
<feature type="binding site" evidence="1">
    <location>
        <position position="227"/>
    </location>
    <ligand>
        <name>dimethylallyl diphosphate</name>
        <dbReference type="ChEBI" id="CHEBI:57623"/>
    </ligand>
</feature>
<feature type="binding site" evidence="1">
    <location>
        <position position="227"/>
    </location>
    <ligand>
        <name>isopentenyl diphosphate</name>
        <dbReference type="ChEBI" id="CHEBI:128769"/>
    </ligand>
</feature>
<feature type="binding site" evidence="1">
    <location>
        <position position="269"/>
    </location>
    <ligand>
        <name>(2E)-4-hydroxy-3-methylbut-2-enyl diphosphate</name>
        <dbReference type="ChEBI" id="CHEBI:128753"/>
    </ligand>
</feature>
<feature type="binding site" evidence="1">
    <location>
        <position position="269"/>
    </location>
    <ligand>
        <name>dimethylallyl diphosphate</name>
        <dbReference type="ChEBI" id="CHEBI:57623"/>
    </ligand>
</feature>
<feature type="binding site" evidence="1">
    <location>
        <position position="269"/>
    </location>
    <ligand>
        <name>isopentenyl diphosphate</name>
        <dbReference type="ChEBI" id="CHEBI:128769"/>
    </ligand>
</feature>
<sequence length="316" mass="34497">MQILLANPRGFCAGVDRAISIVENALAIYGAPIYVRHEVVHNRYVVDSLRKRGAIFIEQISEVPDGAILIFSAHGVSQAVRNEAKSRDLTVFDATCPLVTKVHMEVARASRRGEESILIGHAGHPEVEGTMGQYSNPEGGMFLVESPEDVWTLNVKNEGKLSFMTQTTLSVDDTSDVIDALRKRFPKIVGPRKDDICYATTNRQEAVRALAEQADVVLVVGSKNSSNSNRLAELAQRMGRTAFLIDDAADIQEAWVKDAACVGVTAGASAPDILVQNVIARLREFGGGEAVTLEGREENIVFEVPKELRVDVREVE</sequence>
<gene>
    <name evidence="1" type="primary">ispH</name>
    <name type="synonym">lytB</name>
    <name type="ordered locus">SPA0050</name>
</gene>
<dbReference type="EC" id="1.17.7.4" evidence="1"/>
<dbReference type="EMBL" id="CP000026">
    <property type="protein sequence ID" value="AAV76085.1"/>
    <property type="molecule type" value="Genomic_DNA"/>
</dbReference>
<dbReference type="RefSeq" id="WP_001166415.1">
    <property type="nucleotide sequence ID" value="NC_006511.1"/>
</dbReference>
<dbReference type="SMR" id="Q5PKI4"/>
<dbReference type="KEGG" id="spt:SPA0050"/>
<dbReference type="HOGENOM" id="CLU_027486_1_0_6"/>
<dbReference type="UniPathway" id="UPA00056">
    <property type="reaction ID" value="UER00097"/>
</dbReference>
<dbReference type="UniPathway" id="UPA00059">
    <property type="reaction ID" value="UER00105"/>
</dbReference>
<dbReference type="Proteomes" id="UP000008185">
    <property type="component" value="Chromosome"/>
</dbReference>
<dbReference type="GO" id="GO:0051539">
    <property type="term" value="F:4 iron, 4 sulfur cluster binding"/>
    <property type="evidence" value="ECO:0007669"/>
    <property type="project" value="UniProtKB-UniRule"/>
</dbReference>
<dbReference type="GO" id="GO:0051745">
    <property type="term" value="F:4-hydroxy-3-methylbut-2-enyl diphosphate reductase activity"/>
    <property type="evidence" value="ECO:0007669"/>
    <property type="project" value="UniProtKB-UniRule"/>
</dbReference>
<dbReference type="GO" id="GO:0046872">
    <property type="term" value="F:metal ion binding"/>
    <property type="evidence" value="ECO:0007669"/>
    <property type="project" value="UniProtKB-KW"/>
</dbReference>
<dbReference type="GO" id="GO:0050992">
    <property type="term" value="P:dimethylallyl diphosphate biosynthetic process"/>
    <property type="evidence" value="ECO:0007669"/>
    <property type="project" value="UniProtKB-UniRule"/>
</dbReference>
<dbReference type="GO" id="GO:0019288">
    <property type="term" value="P:isopentenyl diphosphate biosynthetic process, methylerythritol 4-phosphate pathway"/>
    <property type="evidence" value="ECO:0007669"/>
    <property type="project" value="UniProtKB-UniRule"/>
</dbReference>
<dbReference type="GO" id="GO:0016114">
    <property type="term" value="P:terpenoid biosynthetic process"/>
    <property type="evidence" value="ECO:0007669"/>
    <property type="project" value="UniProtKB-UniRule"/>
</dbReference>
<dbReference type="CDD" id="cd13944">
    <property type="entry name" value="lytB_ispH"/>
    <property type="match status" value="1"/>
</dbReference>
<dbReference type="FunFam" id="3.40.1010.20:FF:000001">
    <property type="entry name" value="4-hydroxy-3-methylbut-2-enyl diphosphate reductase"/>
    <property type="match status" value="1"/>
</dbReference>
<dbReference type="FunFam" id="3.40.50.11270:FF:000001">
    <property type="entry name" value="4-hydroxy-3-methylbut-2-enyl diphosphate reductase"/>
    <property type="match status" value="1"/>
</dbReference>
<dbReference type="Gene3D" id="3.40.50.11270">
    <property type="match status" value="1"/>
</dbReference>
<dbReference type="Gene3D" id="3.40.1010.20">
    <property type="entry name" value="4-hydroxy-3-methylbut-2-enyl diphosphate reductase, catalytic domain"/>
    <property type="match status" value="2"/>
</dbReference>
<dbReference type="HAMAP" id="MF_00191">
    <property type="entry name" value="IspH"/>
    <property type="match status" value="1"/>
</dbReference>
<dbReference type="InterPro" id="IPR003451">
    <property type="entry name" value="LytB/IspH"/>
</dbReference>
<dbReference type="NCBIfam" id="TIGR00216">
    <property type="entry name" value="ispH_lytB"/>
    <property type="match status" value="1"/>
</dbReference>
<dbReference type="NCBIfam" id="NF002188">
    <property type="entry name" value="PRK01045.1-2"/>
    <property type="match status" value="1"/>
</dbReference>
<dbReference type="NCBIfam" id="NF002190">
    <property type="entry name" value="PRK01045.1-4"/>
    <property type="match status" value="1"/>
</dbReference>
<dbReference type="PANTHER" id="PTHR30426">
    <property type="entry name" value="4-HYDROXY-3-METHYLBUT-2-ENYL DIPHOSPHATE REDUCTASE"/>
    <property type="match status" value="1"/>
</dbReference>
<dbReference type="PANTHER" id="PTHR30426:SF0">
    <property type="entry name" value="4-HYDROXY-3-METHYLBUT-2-ENYL DIPHOSPHATE REDUCTASE"/>
    <property type="match status" value="1"/>
</dbReference>
<dbReference type="Pfam" id="PF02401">
    <property type="entry name" value="LYTB"/>
    <property type="match status" value="1"/>
</dbReference>
<comment type="function">
    <text evidence="1">Catalyzes the conversion of 1-hydroxy-2-methyl-2-(E)-butenyl 4-diphosphate (HMBPP) into a mixture of isopentenyl diphosphate (IPP) and dimethylallyl diphosphate (DMAPP). Acts in the terminal step of the DOXP/MEP pathway for isoprenoid precursor biosynthesis.</text>
</comment>
<comment type="catalytic activity">
    <reaction evidence="1">
        <text>isopentenyl diphosphate + 2 oxidized [2Fe-2S]-[ferredoxin] + H2O = (2E)-4-hydroxy-3-methylbut-2-enyl diphosphate + 2 reduced [2Fe-2S]-[ferredoxin] + 2 H(+)</text>
        <dbReference type="Rhea" id="RHEA:24488"/>
        <dbReference type="Rhea" id="RHEA-COMP:10000"/>
        <dbReference type="Rhea" id="RHEA-COMP:10001"/>
        <dbReference type="ChEBI" id="CHEBI:15377"/>
        <dbReference type="ChEBI" id="CHEBI:15378"/>
        <dbReference type="ChEBI" id="CHEBI:33737"/>
        <dbReference type="ChEBI" id="CHEBI:33738"/>
        <dbReference type="ChEBI" id="CHEBI:128753"/>
        <dbReference type="ChEBI" id="CHEBI:128769"/>
        <dbReference type="EC" id="1.17.7.4"/>
    </reaction>
</comment>
<comment type="catalytic activity">
    <reaction evidence="1">
        <text>dimethylallyl diphosphate + 2 oxidized [2Fe-2S]-[ferredoxin] + H2O = (2E)-4-hydroxy-3-methylbut-2-enyl diphosphate + 2 reduced [2Fe-2S]-[ferredoxin] + 2 H(+)</text>
        <dbReference type="Rhea" id="RHEA:24825"/>
        <dbReference type="Rhea" id="RHEA-COMP:10000"/>
        <dbReference type="Rhea" id="RHEA-COMP:10001"/>
        <dbReference type="ChEBI" id="CHEBI:15377"/>
        <dbReference type="ChEBI" id="CHEBI:15378"/>
        <dbReference type="ChEBI" id="CHEBI:33737"/>
        <dbReference type="ChEBI" id="CHEBI:33738"/>
        <dbReference type="ChEBI" id="CHEBI:57623"/>
        <dbReference type="ChEBI" id="CHEBI:128753"/>
        <dbReference type="EC" id="1.17.7.4"/>
    </reaction>
</comment>
<comment type="cofactor">
    <cofactor evidence="1">
        <name>[4Fe-4S] cluster</name>
        <dbReference type="ChEBI" id="CHEBI:49883"/>
    </cofactor>
    <text evidence="1">Binds 1 [4Fe-4S] cluster per subunit.</text>
</comment>
<comment type="pathway">
    <text evidence="1">Isoprenoid biosynthesis; dimethylallyl diphosphate biosynthesis; dimethylallyl diphosphate from (2E)-4-hydroxy-3-methylbutenyl diphosphate: step 1/1.</text>
</comment>
<comment type="pathway">
    <text evidence="1">Isoprenoid biosynthesis; isopentenyl diphosphate biosynthesis via DXP pathway; isopentenyl diphosphate from 1-deoxy-D-xylulose 5-phosphate: step 6/6.</text>
</comment>
<comment type="subunit">
    <text evidence="1">Homodimer.</text>
</comment>
<comment type="similarity">
    <text evidence="1">Belongs to the IspH family.</text>
</comment>
<protein>
    <recommendedName>
        <fullName evidence="1">4-hydroxy-3-methylbut-2-enyl diphosphate reductase</fullName>
        <shortName evidence="1">HMBPP reductase</shortName>
        <ecNumber evidence="1">1.17.7.4</ecNumber>
    </recommendedName>
</protein>
<name>ISPH_SALPA</name>
<accession>Q5PKI4</accession>
<proteinExistence type="inferred from homology"/>
<evidence type="ECO:0000255" key="1">
    <source>
        <dbReference type="HAMAP-Rule" id="MF_00191"/>
    </source>
</evidence>
<keyword id="KW-0004">4Fe-4S</keyword>
<keyword id="KW-0408">Iron</keyword>
<keyword id="KW-0411">Iron-sulfur</keyword>
<keyword id="KW-0414">Isoprene biosynthesis</keyword>
<keyword id="KW-0479">Metal-binding</keyword>
<keyword id="KW-0560">Oxidoreductase</keyword>